<keyword id="KW-0687">Ribonucleoprotein</keyword>
<keyword id="KW-0689">Ribosomal protein</keyword>
<keyword id="KW-0694">RNA-binding</keyword>
<keyword id="KW-0699">rRNA-binding</keyword>
<organism>
    <name type="scientific">Histophilus somni (strain 129Pt)</name>
    <name type="common">Haemophilus somnus</name>
    <dbReference type="NCBI Taxonomy" id="205914"/>
    <lineage>
        <taxon>Bacteria</taxon>
        <taxon>Pseudomonadati</taxon>
        <taxon>Pseudomonadota</taxon>
        <taxon>Gammaproteobacteria</taxon>
        <taxon>Pasteurellales</taxon>
        <taxon>Pasteurellaceae</taxon>
        <taxon>Histophilus</taxon>
    </lineage>
</organism>
<reference key="1">
    <citation type="journal article" date="2007" name="J. Bacteriol.">
        <title>Complete genome sequence of Haemophilus somnus (Histophilus somni) strain 129Pt and comparison to Haemophilus ducreyi 35000HP and Haemophilus influenzae Rd.</title>
        <authorList>
            <person name="Challacombe J.F."/>
            <person name="Duncan A.J."/>
            <person name="Brettin T.S."/>
            <person name="Bruce D."/>
            <person name="Chertkov O."/>
            <person name="Detter J.C."/>
            <person name="Han C.S."/>
            <person name="Misra M."/>
            <person name="Richardson P."/>
            <person name="Tapia R."/>
            <person name="Thayer N."/>
            <person name="Xie G."/>
            <person name="Inzana T.J."/>
        </authorList>
    </citation>
    <scope>NUCLEOTIDE SEQUENCE [LARGE SCALE GENOMIC DNA]</scope>
    <source>
        <strain>129Pt</strain>
    </source>
</reference>
<accession>Q0I151</accession>
<dbReference type="EMBL" id="CP000436">
    <property type="protein sequence ID" value="ABI24352.1"/>
    <property type="molecule type" value="Genomic_DNA"/>
</dbReference>
<dbReference type="SMR" id="Q0I151"/>
<dbReference type="KEGG" id="hso:HS_0071"/>
<dbReference type="eggNOG" id="COG0198">
    <property type="taxonomic scope" value="Bacteria"/>
</dbReference>
<dbReference type="HOGENOM" id="CLU_093315_2_2_6"/>
<dbReference type="GO" id="GO:1990904">
    <property type="term" value="C:ribonucleoprotein complex"/>
    <property type="evidence" value="ECO:0007669"/>
    <property type="project" value="UniProtKB-KW"/>
</dbReference>
<dbReference type="GO" id="GO:0005840">
    <property type="term" value="C:ribosome"/>
    <property type="evidence" value="ECO:0007669"/>
    <property type="project" value="UniProtKB-KW"/>
</dbReference>
<dbReference type="GO" id="GO:0019843">
    <property type="term" value="F:rRNA binding"/>
    <property type="evidence" value="ECO:0007669"/>
    <property type="project" value="UniProtKB-UniRule"/>
</dbReference>
<dbReference type="GO" id="GO:0003735">
    <property type="term" value="F:structural constituent of ribosome"/>
    <property type="evidence" value="ECO:0007669"/>
    <property type="project" value="InterPro"/>
</dbReference>
<dbReference type="GO" id="GO:0006412">
    <property type="term" value="P:translation"/>
    <property type="evidence" value="ECO:0007669"/>
    <property type="project" value="UniProtKB-UniRule"/>
</dbReference>
<dbReference type="CDD" id="cd06089">
    <property type="entry name" value="KOW_RPL26"/>
    <property type="match status" value="1"/>
</dbReference>
<dbReference type="FunFam" id="2.30.30.30:FF:000004">
    <property type="entry name" value="50S ribosomal protein L24"/>
    <property type="match status" value="1"/>
</dbReference>
<dbReference type="Gene3D" id="2.30.30.30">
    <property type="match status" value="1"/>
</dbReference>
<dbReference type="HAMAP" id="MF_01326_B">
    <property type="entry name" value="Ribosomal_uL24_B"/>
    <property type="match status" value="1"/>
</dbReference>
<dbReference type="InterPro" id="IPR005824">
    <property type="entry name" value="KOW"/>
</dbReference>
<dbReference type="InterPro" id="IPR014722">
    <property type="entry name" value="Rib_uL2_dom2"/>
</dbReference>
<dbReference type="InterPro" id="IPR003256">
    <property type="entry name" value="Ribosomal_uL24"/>
</dbReference>
<dbReference type="InterPro" id="IPR005825">
    <property type="entry name" value="Ribosomal_uL24_CS"/>
</dbReference>
<dbReference type="InterPro" id="IPR041988">
    <property type="entry name" value="Ribosomal_uL24_KOW"/>
</dbReference>
<dbReference type="InterPro" id="IPR008991">
    <property type="entry name" value="Translation_prot_SH3-like_sf"/>
</dbReference>
<dbReference type="NCBIfam" id="TIGR01079">
    <property type="entry name" value="rplX_bact"/>
    <property type="match status" value="1"/>
</dbReference>
<dbReference type="PANTHER" id="PTHR12903">
    <property type="entry name" value="MITOCHONDRIAL RIBOSOMAL PROTEIN L24"/>
    <property type="match status" value="1"/>
</dbReference>
<dbReference type="Pfam" id="PF00467">
    <property type="entry name" value="KOW"/>
    <property type="match status" value="1"/>
</dbReference>
<dbReference type="Pfam" id="PF17136">
    <property type="entry name" value="ribosomal_L24"/>
    <property type="match status" value="1"/>
</dbReference>
<dbReference type="SMART" id="SM00739">
    <property type="entry name" value="KOW"/>
    <property type="match status" value="1"/>
</dbReference>
<dbReference type="SUPFAM" id="SSF50104">
    <property type="entry name" value="Translation proteins SH3-like domain"/>
    <property type="match status" value="1"/>
</dbReference>
<dbReference type="PROSITE" id="PS01108">
    <property type="entry name" value="RIBOSOMAL_L24"/>
    <property type="match status" value="1"/>
</dbReference>
<proteinExistence type="inferred from homology"/>
<protein>
    <recommendedName>
        <fullName evidence="1">Large ribosomal subunit protein uL24</fullName>
    </recommendedName>
    <alternativeName>
        <fullName evidence="2">50S ribosomal protein L24</fullName>
    </alternativeName>
</protein>
<gene>
    <name evidence="1" type="primary">rplX</name>
    <name type="ordered locus">HS_0071</name>
</gene>
<evidence type="ECO:0000255" key="1">
    <source>
        <dbReference type="HAMAP-Rule" id="MF_01326"/>
    </source>
</evidence>
<evidence type="ECO:0000305" key="2"/>
<comment type="function">
    <text evidence="1">One of two assembly initiator proteins, it binds directly to the 5'-end of the 23S rRNA, where it nucleates assembly of the 50S subunit.</text>
</comment>
<comment type="function">
    <text evidence="1">One of the proteins that surrounds the polypeptide exit tunnel on the outside of the subunit.</text>
</comment>
<comment type="subunit">
    <text evidence="1">Part of the 50S ribosomal subunit.</text>
</comment>
<comment type="similarity">
    <text evidence="1">Belongs to the universal ribosomal protein uL24 family.</text>
</comment>
<sequence length="103" mass="11182">MAAKIRQNDEVIVLAGKDKGKRGKVTKVLPNGKVFVEGVNIITKHEKPVPALGKAGGLVKKEAAIDVSNVAIFNPTTNKADRVGFRIEDGKKVRFFKSNNEII</sequence>
<feature type="chain" id="PRO_1000052223" description="Large ribosomal subunit protein uL24">
    <location>
        <begin position="1"/>
        <end position="103"/>
    </location>
</feature>
<name>RL24_HISS1</name>